<comment type="function">
    <text evidence="1">Golgi membrane protein involved in vesicular trafficking.</text>
</comment>
<comment type="subcellular location">
    <subcellularLocation>
        <location evidence="1">Golgi apparatus membrane</location>
        <topology evidence="1">Multi-pass membrane protein</topology>
    </subcellularLocation>
</comment>
<comment type="similarity">
    <text evidence="4">Belongs to the TVP23 family.</text>
</comment>
<dbReference type="EMBL" id="CP000497">
    <property type="protein sequence ID" value="ABN65445.2"/>
    <property type="molecule type" value="Genomic_DNA"/>
</dbReference>
<dbReference type="RefSeq" id="XP_001383474.2">
    <property type="nucleotide sequence ID" value="XM_001383437.1"/>
</dbReference>
<dbReference type="SMR" id="A3LRT4"/>
<dbReference type="FunCoup" id="A3LRT4">
    <property type="interactions" value="415"/>
</dbReference>
<dbReference type="STRING" id="322104.A3LRT4"/>
<dbReference type="GlyCosmos" id="A3LRT4">
    <property type="glycosylation" value="4 sites, No reported glycans"/>
</dbReference>
<dbReference type="GeneID" id="4838224"/>
<dbReference type="KEGG" id="pic:PICST_35556"/>
<dbReference type="eggNOG" id="KOG3195">
    <property type="taxonomic scope" value="Eukaryota"/>
</dbReference>
<dbReference type="HOGENOM" id="CLU_074845_0_0_1"/>
<dbReference type="InParanoid" id="A3LRT4"/>
<dbReference type="OMA" id="FEWMIVA"/>
<dbReference type="OrthoDB" id="2151161at2759"/>
<dbReference type="Proteomes" id="UP000002258">
    <property type="component" value="Chromosome 3"/>
</dbReference>
<dbReference type="GO" id="GO:0000139">
    <property type="term" value="C:Golgi membrane"/>
    <property type="evidence" value="ECO:0007669"/>
    <property type="project" value="UniProtKB-SubCell"/>
</dbReference>
<dbReference type="GO" id="GO:0009306">
    <property type="term" value="P:protein secretion"/>
    <property type="evidence" value="ECO:0007669"/>
    <property type="project" value="TreeGrafter"/>
</dbReference>
<dbReference type="GO" id="GO:0016192">
    <property type="term" value="P:vesicle-mediated transport"/>
    <property type="evidence" value="ECO:0007669"/>
    <property type="project" value="TreeGrafter"/>
</dbReference>
<dbReference type="InterPro" id="IPR008564">
    <property type="entry name" value="TVP23-like"/>
</dbReference>
<dbReference type="PANTHER" id="PTHR13019">
    <property type="entry name" value="GOLGI APPARATUS MEMBRANE PROTEIN TVP23"/>
    <property type="match status" value="1"/>
</dbReference>
<dbReference type="PANTHER" id="PTHR13019:SF7">
    <property type="entry name" value="GOLGI APPARATUS MEMBRANE PROTEIN TVP23"/>
    <property type="match status" value="1"/>
</dbReference>
<dbReference type="Pfam" id="PF05832">
    <property type="entry name" value="DUF846"/>
    <property type="match status" value="1"/>
</dbReference>
<sequence>MSSDYTAIESDIPADTNPPPSYQNVSGQMETEQTNTNSQTTNGSTGPQTWTDRLKESSHPVALLFYMFFRLAPIFIYIFGNLFIGLITSKNKFILHFIILILLFAADFWNLKNVAGRLLVGLRWWNETNATEGNVGEFENVWVFETADPNRYINPIDSKVFWILLYAQPVVWMVFAFLCVLKFQFLYLLLIIIAISLSLTNAMAFTKCDKFGKANNFATDIFSRATGSIFSRLNPFAS</sequence>
<protein>
    <recommendedName>
        <fullName>Golgi apparatus membrane protein TVP23</fullName>
    </recommendedName>
</protein>
<name>TVP23_PICST</name>
<accession>A3LRT4</accession>
<gene>
    <name type="primary">TVP23</name>
    <name type="ORF">PICST_35556</name>
</gene>
<evidence type="ECO:0000250" key="1"/>
<evidence type="ECO:0000255" key="2"/>
<evidence type="ECO:0000256" key="3">
    <source>
        <dbReference type="SAM" id="MobiDB-lite"/>
    </source>
</evidence>
<evidence type="ECO:0000305" key="4"/>
<feature type="chain" id="PRO_0000343054" description="Golgi apparatus membrane protein TVP23">
    <location>
        <begin position="1"/>
        <end position="238"/>
    </location>
</feature>
<feature type="transmembrane region" description="Helical" evidence="2">
    <location>
        <begin position="67"/>
        <end position="87"/>
    </location>
</feature>
<feature type="transmembrane region" description="Helical" evidence="2">
    <location>
        <begin position="91"/>
        <end position="111"/>
    </location>
</feature>
<feature type="transmembrane region" description="Helical" evidence="2">
    <location>
        <begin position="153"/>
        <end position="173"/>
    </location>
</feature>
<feature type="transmembrane region" description="Helical" evidence="2">
    <location>
        <begin position="175"/>
        <end position="195"/>
    </location>
</feature>
<feature type="region of interest" description="Disordered" evidence="3">
    <location>
        <begin position="1"/>
        <end position="51"/>
    </location>
</feature>
<feature type="compositionally biased region" description="Low complexity" evidence="3">
    <location>
        <begin position="30"/>
        <end position="46"/>
    </location>
</feature>
<feature type="glycosylation site" description="N-linked (GlcNAc...) asparagine" evidence="2">
    <location>
        <position position="24"/>
    </location>
</feature>
<feature type="glycosylation site" description="N-linked (GlcNAc...) asparagine" evidence="2">
    <location>
        <position position="42"/>
    </location>
</feature>
<feature type="glycosylation site" description="N-linked (GlcNAc...) asparagine" evidence="2">
    <location>
        <position position="126"/>
    </location>
</feature>
<feature type="glycosylation site" description="N-linked (GlcNAc...) asparagine" evidence="2">
    <location>
        <position position="129"/>
    </location>
</feature>
<proteinExistence type="inferred from homology"/>
<keyword id="KW-0325">Glycoprotein</keyword>
<keyword id="KW-0333">Golgi apparatus</keyword>
<keyword id="KW-0472">Membrane</keyword>
<keyword id="KW-1185">Reference proteome</keyword>
<keyword id="KW-0812">Transmembrane</keyword>
<keyword id="KW-1133">Transmembrane helix</keyword>
<organism>
    <name type="scientific">Scheffersomyces stipitis (strain ATCC 58785 / CBS 6054 / NBRC 10063 / NRRL Y-11545)</name>
    <name type="common">Yeast</name>
    <name type="synonym">Pichia stipitis</name>
    <dbReference type="NCBI Taxonomy" id="322104"/>
    <lineage>
        <taxon>Eukaryota</taxon>
        <taxon>Fungi</taxon>
        <taxon>Dikarya</taxon>
        <taxon>Ascomycota</taxon>
        <taxon>Saccharomycotina</taxon>
        <taxon>Pichiomycetes</taxon>
        <taxon>Debaryomycetaceae</taxon>
        <taxon>Scheffersomyces</taxon>
    </lineage>
</organism>
<reference key="1">
    <citation type="journal article" date="2007" name="Nat. Biotechnol.">
        <title>Genome sequence of the lignocellulose-bioconverting and xylose-fermenting yeast Pichia stipitis.</title>
        <authorList>
            <person name="Jeffries T.W."/>
            <person name="Grigoriev I.V."/>
            <person name="Grimwood J."/>
            <person name="Laplaza J.M."/>
            <person name="Aerts A."/>
            <person name="Salamov A."/>
            <person name="Schmutz J."/>
            <person name="Lindquist E."/>
            <person name="Dehal P."/>
            <person name="Shapiro H."/>
            <person name="Jin Y.-S."/>
            <person name="Passoth V."/>
            <person name="Richardson P.M."/>
        </authorList>
    </citation>
    <scope>NUCLEOTIDE SEQUENCE [LARGE SCALE GENOMIC DNA]</scope>
    <source>
        <strain>ATCC 58785 / CBS 6054 / NBRC 10063 / NRRL Y-11545</strain>
    </source>
</reference>